<feature type="chain" id="PRO_0000118478" description="NADH-ubiquinone oxidoreductase chain 4L">
    <location>
        <begin position="1"/>
        <end position="98"/>
    </location>
</feature>
<feature type="transmembrane region" description="Helical" evidence="3">
    <location>
        <begin position="1"/>
        <end position="21"/>
    </location>
</feature>
<feature type="transmembrane region" description="Helical" evidence="3">
    <location>
        <begin position="29"/>
        <end position="49"/>
    </location>
</feature>
<feature type="transmembrane region" description="Helical" evidence="3">
    <location>
        <begin position="58"/>
        <end position="78"/>
    </location>
</feature>
<evidence type="ECO:0000250" key="1">
    <source>
        <dbReference type="UniProtKB" id="P03901"/>
    </source>
</evidence>
<evidence type="ECO:0000250" key="2">
    <source>
        <dbReference type="UniProtKB" id="P03902"/>
    </source>
</evidence>
<evidence type="ECO:0000255" key="3"/>
<evidence type="ECO:0000305" key="4"/>
<organism>
    <name type="scientific">Pongo pygmaeus</name>
    <name type="common">Bornean orangutan</name>
    <dbReference type="NCBI Taxonomy" id="9600"/>
    <lineage>
        <taxon>Eukaryota</taxon>
        <taxon>Metazoa</taxon>
        <taxon>Chordata</taxon>
        <taxon>Craniata</taxon>
        <taxon>Vertebrata</taxon>
        <taxon>Euteleostomi</taxon>
        <taxon>Mammalia</taxon>
        <taxon>Eutheria</taxon>
        <taxon>Euarchontoglires</taxon>
        <taxon>Primates</taxon>
        <taxon>Haplorrhini</taxon>
        <taxon>Catarrhini</taxon>
        <taxon>Hominidae</taxon>
        <taxon>Pongo</taxon>
    </lineage>
</organism>
<name>NU4LM_PONPY</name>
<sequence length="98" mass="10782">MPLIYMNITLAFTMSLLGMLVYRSHLMSSLLCLEGMMLSLFIMITLMTLNTHSLLANIMPITMLVFAACEAAVGLALLASISNTYGLDYVNNLNLLQC</sequence>
<geneLocation type="mitochondrion"/>
<keyword id="KW-0249">Electron transport</keyword>
<keyword id="KW-0472">Membrane</keyword>
<keyword id="KW-0496">Mitochondrion</keyword>
<keyword id="KW-0999">Mitochondrion inner membrane</keyword>
<keyword id="KW-0520">NAD</keyword>
<keyword id="KW-0679">Respiratory chain</keyword>
<keyword id="KW-1278">Translocase</keyword>
<keyword id="KW-0812">Transmembrane</keyword>
<keyword id="KW-1133">Transmembrane helix</keyword>
<keyword id="KW-0813">Transport</keyword>
<keyword id="KW-0830">Ubiquinone</keyword>
<proteinExistence type="inferred from homology"/>
<accession>P61796</accession>
<accession>Q35585</accession>
<protein>
    <recommendedName>
        <fullName>NADH-ubiquinone oxidoreductase chain 4L</fullName>
        <ecNumber>7.1.1.2</ecNumber>
    </recommendedName>
    <alternativeName>
        <fullName>NADH dehydrogenase subunit 4L</fullName>
    </alternativeName>
</protein>
<dbReference type="EC" id="7.1.1.2"/>
<dbReference type="EMBL" id="D38115">
    <property type="protein sequence ID" value="BAA07310.1"/>
    <property type="molecule type" value="Genomic_DNA"/>
</dbReference>
<dbReference type="PIR" id="T14144">
    <property type="entry name" value="T14144"/>
</dbReference>
<dbReference type="RefSeq" id="NP_008233.1">
    <property type="nucleotide sequence ID" value="NC_001646.1"/>
</dbReference>
<dbReference type="SMR" id="P61796"/>
<dbReference type="GeneID" id="807905"/>
<dbReference type="KEGG" id="ppyg:807905"/>
<dbReference type="CTD" id="4539"/>
<dbReference type="GO" id="GO:0005743">
    <property type="term" value="C:mitochondrial inner membrane"/>
    <property type="evidence" value="ECO:0000250"/>
    <property type="project" value="UniProtKB"/>
</dbReference>
<dbReference type="GO" id="GO:0045271">
    <property type="term" value="C:respiratory chain complex I"/>
    <property type="evidence" value="ECO:0000250"/>
    <property type="project" value="UniProtKB"/>
</dbReference>
<dbReference type="GO" id="GO:0008137">
    <property type="term" value="F:NADH dehydrogenase (ubiquinone) activity"/>
    <property type="evidence" value="ECO:0000250"/>
    <property type="project" value="UniProtKB"/>
</dbReference>
<dbReference type="GO" id="GO:0042773">
    <property type="term" value="P:ATP synthesis coupled electron transport"/>
    <property type="evidence" value="ECO:0007669"/>
    <property type="project" value="InterPro"/>
</dbReference>
<dbReference type="FunFam" id="1.10.287.3510:FF:000002">
    <property type="entry name" value="NADH-ubiquinone oxidoreductase chain 4L"/>
    <property type="match status" value="1"/>
</dbReference>
<dbReference type="Gene3D" id="1.10.287.3510">
    <property type="match status" value="1"/>
</dbReference>
<dbReference type="InterPro" id="IPR001133">
    <property type="entry name" value="NADH_UbQ_OxRdtase_chain4L/K"/>
</dbReference>
<dbReference type="InterPro" id="IPR039428">
    <property type="entry name" value="NUOK/Mnh_C1-like"/>
</dbReference>
<dbReference type="PANTHER" id="PTHR11434:SF0">
    <property type="entry name" value="NADH-UBIQUINONE OXIDOREDUCTASE CHAIN 4L"/>
    <property type="match status" value="1"/>
</dbReference>
<dbReference type="PANTHER" id="PTHR11434">
    <property type="entry name" value="NADH-UBIQUINONE OXIDOREDUCTASE SUBUNIT ND4L"/>
    <property type="match status" value="1"/>
</dbReference>
<dbReference type="Pfam" id="PF00420">
    <property type="entry name" value="Oxidored_q2"/>
    <property type="match status" value="1"/>
</dbReference>
<comment type="function">
    <text evidence="1">Core subunit of the mitochondrial membrane respiratory chain NADH dehydrogenase (Complex I) which catalyzes electron transfer from NADH through the respiratory chain, using ubiquinone as an electron acceptor. Part of the enzyme membrane arm which is embedded in the lipid bilayer and involved in proton translocation.</text>
</comment>
<comment type="catalytic activity">
    <reaction evidence="1">
        <text>a ubiquinone + NADH + 5 H(+)(in) = a ubiquinol + NAD(+) + 4 H(+)(out)</text>
        <dbReference type="Rhea" id="RHEA:29091"/>
        <dbReference type="Rhea" id="RHEA-COMP:9565"/>
        <dbReference type="Rhea" id="RHEA-COMP:9566"/>
        <dbReference type="ChEBI" id="CHEBI:15378"/>
        <dbReference type="ChEBI" id="CHEBI:16389"/>
        <dbReference type="ChEBI" id="CHEBI:17976"/>
        <dbReference type="ChEBI" id="CHEBI:57540"/>
        <dbReference type="ChEBI" id="CHEBI:57945"/>
        <dbReference type="EC" id="7.1.1.2"/>
    </reaction>
    <physiologicalReaction direction="left-to-right" evidence="1">
        <dbReference type="Rhea" id="RHEA:29092"/>
    </physiologicalReaction>
</comment>
<comment type="subunit">
    <text evidence="2">Core subunit of respiratory chain NADH dehydrogenase (Complex I) which is composed of 45 different subunits.</text>
</comment>
<comment type="subcellular location">
    <subcellularLocation>
        <location evidence="2">Mitochondrion inner membrane</location>
        <topology evidence="3">Multi-pass membrane protein</topology>
    </subcellularLocation>
</comment>
<comment type="similarity">
    <text evidence="4">Belongs to the complex I subunit 4L family.</text>
</comment>
<gene>
    <name type="primary">MT-ND4L</name>
    <name type="synonym">MTND4L</name>
    <name type="synonym">NADH4L</name>
    <name type="synonym">ND4L</name>
</gene>
<reference key="1">
    <citation type="journal article" date="1995" name="Proc. Natl. Acad. Sci. U.S.A.">
        <title>Recent African origin of modern humans revealed by complete sequences of hominoid mitochondrial DNAs.</title>
        <authorList>
            <person name="Horai S."/>
            <person name="Hayasaka K."/>
            <person name="Kondo R."/>
            <person name="Tsugane K."/>
            <person name="Takahata N."/>
        </authorList>
    </citation>
    <scope>NUCLEOTIDE SEQUENCE [GENOMIC DNA]</scope>
</reference>